<comment type="function">
    <text evidence="1">Forms part of the ribosomal stalk, playing a central role in the interaction of the ribosome with GTP-bound translation factors.</text>
</comment>
<comment type="subunit">
    <text evidence="1">Part of the 50S ribosomal subunit. Forms part of the ribosomal stalk which helps the ribosome interact with GTP-bound translation factors. Forms a heptameric L10(L12)2(L12)2(L12)2 complex, where L10 forms an elongated spine to which the L12 dimers bind in a sequential fashion.</text>
</comment>
<comment type="similarity">
    <text evidence="1">Belongs to the universal ribosomal protein uL10 family.</text>
</comment>
<feature type="chain" id="PRO_1000204815" description="Large ribosomal subunit protein uL10">
    <location>
        <begin position="1"/>
        <end position="338"/>
    </location>
</feature>
<feature type="region of interest" description="Disordered" evidence="2">
    <location>
        <begin position="297"/>
        <end position="338"/>
    </location>
</feature>
<feature type="compositionally biased region" description="Low complexity" evidence="2">
    <location>
        <begin position="298"/>
        <end position="308"/>
    </location>
</feature>
<feature type="compositionally biased region" description="Basic and acidic residues" evidence="2">
    <location>
        <begin position="309"/>
        <end position="325"/>
    </location>
</feature>
<reference key="1">
    <citation type="journal article" date="2009" name="Proc. Natl. Acad. Sci. U.S.A.">
        <title>Biogeography of the Sulfolobus islandicus pan-genome.</title>
        <authorList>
            <person name="Reno M.L."/>
            <person name="Held N.L."/>
            <person name="Fields C.J."/>
            <person name="Burke P.V."/>
            <person name="Whitaker R.J."/>
        </authorList>
    </citation>
    <scope>NUCLEOTIDE SEQUENCE [LARGE SCALE GENOMIC DNA]</scope>
    <source>
        <strain>M.14.25 / Kamchatka #1</strain>
    </source>
</reference>
<dbReference type="EMBL" id="CP001400">
    <property type="protein sequence ID" value="ACP38508.1"/>
    <property type="molecule type" value="Genomic_DNA"/>
</dbReference>
<dbReference type="RefSeq" id="WP_012711738.1">
    <property type="nucleotide sequence ID" value="NC_012588.1"/>
</dbReference>
<dbReference type="SMR" id="C3MXH4"/>
<dbReference type="KEGG" id="sia:M1425_1763"/>
<dbReference type="HOGENOM" id="CLU_053173_0_0_2"/>
<dbReference type="Proteomes" id="UP000001350">
    <property type="component" value="Chromosome"/>
</dbReference>
<dbReference type="GO" id="GO:0022625">
    <property type="term" value="C:cytosolic large ribosomal subunit"/>
    <property type="evidence" value="ECO:0007669"/>
    <property type="project" value="TreeGrafter"/>
</dbReference>
<dbReference type="GO" id="GO:0070180">
    <property type="term" value="F:large ribosomal subunit rRNA binding"/>
    <property type="evidence" value="ECO:0007669"/>
    <property type="project" value="UniProtKB-UniRule"/>
</dbReference>
<dbReference type="GO" id="GO:0003735">
    <property type="term" value="F:structural constituent of ribosome"/>
    <property type="evidence" value="ECO:0007669"/>
    <property type="project" value="TreeGrafter"/>
</dbReference>
<dbReference type="GO" id="GO:0002181">
    <property type="term" value="P:cytoplasmic translation"/>
    <property type="evidence" value="ECO:0007669"/>
    <property type="project" value="TreeGrafter"/>
</dbReference>
<dbReference type="GO" id="GO:0000027">
    <property type="term" value="P:ribosomal large subunit assembly"/>
    <property type="evidence" value="ECO:0007669"/>
    <property type="project" value="TreeGrafter"/>
</dbReference>
<dbReference type="CDD" id="cd05795">
    <property type="entry name" value="Ribosomal_P0_L10e"/>
    <property type="match status" value="1"/>
</dbReference>
<dbReference type="FunFam" id="3.90.105.20:FF:000001">
    <property type="entry name" value="60S acidic ribosomal protein P0"/>
    <property type="match status" value="1"/>
</dbReference>
<dbReference type="Gene3D" id="3.30.70.1730">
    <property type="match status" value="1"/>
</dbReference>
<dbReference type="Gene3D" id="3.90.105.20">
    <property type="match status" value="1"/>
</dbReference>
<dbReference type="Gene3D" id="6.10.140.760">
    <property type="match status" value="1"/>
</dbReference>
<dbReference type="HAMAP" id="MF_00280">
    <property type="entry name" value="Ribosomal_uL10_arch"/>
    <property type="match status" value="1"/>
</dbReference>
<dbReference type="InterPro" id="IPR050323">
    <property type="entry name" value="Ribosomal_protein_uL10"/>
</dbReference>
<dbReference type="InterPro" id="IPR001790">
    <property type="entry name" value="Ribosomal_uL10"/>
</dbReference>
<dbReference type="InterPro" id="IPR040637">
    <property type="entry name" value="Ribosomal_uL10-like_insert"/>
</dbReference>
<dbReference type="InterPro" id="IPR043164">
    <property type="entry name" value="Ribosomal_uL10-like_insert_sf"/>
</dbReference>
<dbReference type="InterPro" id="IPR043141">
    <property type="entry name" value="Ribosomal_uL10-like_sf"/>
</dbReference>
<dbReference type="InterPro" id="IPR022909">
    <property type="entry name" value="Ribosomal_uL10_arc"/>
</dbReference>
<dbReference type="NCBIfam" id="NF003095">
    <property type="entry name" value="PRK04019.1-1"/>
    <property type="match status" value="1"/>
</dbReference>
<dbReference type="PANTHER" id="PTHR45699">
    <property type="entry name" value="60S ACIDIC RIBOSOMAL PROTEIN P0"/>
    <property type="match status" value="1"/>
</dbReference>
<dbReference type="PANTHER" id="PTHR45699:SF3">
    <property type="entry name" value="LARGE RIBOSOMAL SUBUNIT PROTEIN UL10"/>
    <property type="match status" value="1"/>
</dbReference>
<dbReference type="Pfam" id="PF00466">
    <property type="entry name" value="Ribosomal_L10"/>
    <property type="match status" value="1"/>
</dbReference>
<dbReference type="Pfam" id="PF17777">
    <property type="entry name" value="RL10P_insert"/>
    <property type="match status" value="1"/>
</dbReference>
<dbReference type="SUPFAM" id="SSF160369">
    <property type="entry name" value="Ribosomal protein L10-like"/>
    <property type="match status" value="1"/>
</dbReference>
<accession>C3MXH4</accession>
<protein>
    <recommendedName>
        <fullName evidence="1">Large ribosomal subunit protein uL10</fullName>
    </recommendedName>
    <alternativeName>
        <fullName evidence="3">50S ribosomal protein L10</fullName>
    </alternativeName>
    <alternativeName>
        <fullName evidence="1">Acidic ribosomal protein P0 homolog</fullName>
    </alternativeName>
</protein>
<name>RL10_SACI4</name>
<evidence type="ECO:0000255" key="1">
    <source>
        <dbReference type="HAMAP-Rule" id="MF_00280"/>
    </source>
</evidence>
<evidence type="ECO:0000256" key="2">
    <source>
        <dbReference type="SAM" id="MobiDB-lite"/>
    </source>
</evidence>
<evidence type="ECO:0000305" key="3"/>
<sequence length="338" mass="37148">MKRLALALKQKKVASWKLEEVKELTELIKNSNTILIGSLEGFPADKLHEIRKKLRGKAIIKVTKNTLFKIAAKNAGINIEKLEQYLTGPNVFIFTKDNPFLTNMFFENYKLRRYAMPGDKAEEEVIIPAGDTGMPAGPILSVFGKLKVQTKVQDGKVHVVKDTVVAKPGDVIPTEALPILQKLGIMPVYVKLKIKVAYHEGLVIPAENLKLNLEGYRSNIAEAYRNAFTLAVEIAYPVPDVLKFTINKIFKNAITLASEIGYLTPESAQAVISKAVAKAYALATAISGKVDLGVKLPSAQQTQTQQSTAEEKKEEKKEEEKKGPSEEEIGSGLASLFG</sequence>
<organism>
    <name type="scientific">Saccharolobus islandicus (strain M.14.25 / Kamchatka #1)</name>
    <name type="common">Sulfolobus islandicus</name>
    <dbReference type="NCBI Taxonomy" id="427317"/>
    <lineage>
        <taxon>Archaea</taxon>
        <taxon>Thermoproteota</taxon>
        <taxon>Thermoprotei</taxon>
        <taxon>Sulfolobales</taxon>
        <taxon>Sulfolobaceae</taxon>
        <taxon>Saccharolobus</taxon>
    </lineage>
</organism>
<keyword id="KW-0687">Ribonucleoprotein</keyword>
<keyword id="KW-0689">Ribosomal protein</keyword>
<keyword id="KW-0694">RNA-binding</keyword>
<keyword id="KW-0699">rRNA-binding</keyword>
<proteinExistence type="inferred from homology"/>
<gene>
    <name evidence="1" type="primary">rpl10</name>
    <name evidence="1" type="synonym">rplP0</name>
    <name type="ordered locus">M1425_1763</name>
</gene>